<accession>B4RJQ3</accession>
<reference key="1">
    <citation type="journal article" date="2008" name="J. Bacteriol.">
        <title>Complete genome sequence of Neisseria gonorrhoeae NCCP11945.</title>
        <authorList>
            <person name="Chung G.T."/>
            <person name="Yoo J.S."/>
            <person name="Oh H.B."/>
            <person name="Lee Y.S."/>
            <person name="Cha S.H."/>
            <person name="Kim S.J."/>
            <person name="Yoo C.K."/>
        </authorList>
    </citation>
    <scope>NUCLEOTIDE SEQUENCE [LARGE SCALE GENOMIC DNA]</scope>
    <source>
        <strain>NCCP11945</strain>
    </source>
</reference>
<keyword id="KW-0378">Hydrolase</keyword>
<evidence type="ECO:0000255" key="1">
    <source>
        <dbReference type="HAMAP-Rule" id="MF_00199"/>
    </source>
</evidence>
<organism>
    <name type="scientific">Neisseria gonorrhoeae (strain NCCP11945)</name>
    <dbReference type="NCBI Taxonomy" id="521006"/>
    <lineage>
        <taxon>Bacteria</taxon>
        <taxon>Pseudomonadati</taxon>
        <taxon>Pseudomonadota</taxon>
        <taxon>Betaproteobacteria</taxon>
        <taxon>Neisseriales</taxon>
        <taxon>Neisseriaceae</taxon>
        <taxon>Neisseria</taxon>
    </lineage>
</organism>
<proteinExistence type="inferred from homology"/>
<gene>
    <name evidence="1" type="primary">apaH</name>
    <name type="ordered locus">NGK_0363</name>
</gene>
<feature type="chain" id="PRO_1000099327" description="Bis(5'-nucleosyl)-tetraphosphatase, symmetrical">
    <location>
        <begin position="1"/>
        <end position="276"/>
    </location>
</feature>
<dbReference type="EC" id="3.6.1.41" evidence="1"/>
<dbReference type="EMBL" id="CP001050">
    <property type="protein sequence ID" value="ACF29056.1"/>
    <property type="molecule type" value="Genomic_DNA"/>
</dbReference>
<dbReference type="RefSeq" id="WP_003687564.1">
    <property type="nucleotide sequence ID" value="NC_011035.1"/>
</dbReference>
<dbReference type="SMR" id="B4RJQ3"/>
<dbReference type="KEGG" id="ngk:NGK_0363"/>
<dbReference type="HOGENOM" id="CLU_056184_2_0_4"/>
<dbReference type="Proteomes" id="UP000002564">
    <property type="component" value="Chromosome"/>
</dbReference>
<dbReference type="GO" id="GO:0008803">
    <property type="term" value="F:bis(5'-nucleosyl)-tetraphosphatase (symmetrical) activity"/>
    <property type="evidence" value="ECO:0007669"/>
    <property type="project" value="UniProtKB-UniRule"/>
</dbReference>
<dbReference type="CDD" id="cd07422">
    <property type="entry name" value="MPP_ApaH"/>
    <property type="match status" value="1"/>
</dbReference>
<dbReference type="Gene3D" id="3.60.21.10">
    <property type="match status" value="1"/>
</dbReference>
<dbReference type="HAMAP" id="MF_00199">
    <property type="entry name" value="ApaH"/>
    <property type="match status" value="1"/>
</dbReference>
<dbReference type="InterPro" id="IPR004617">
    <property type="entry name" value="ApaH"/>
</dbReference>
<dbReference type="InterPro" id="IPR004843">
    <property type="entry name" value="Calcineurin-like_PHP_ApaH"/>
</dbReference>
<dbReference type="InterPro" id="IPR029052">
    <property type="entry name" value="Metallo-depent_PP-like"/>
</dbReference>
<dbReference type="NCBIfam" id="TIGR00668">
    <property type="entry name" value="apaH"/>
    <property type="match status" value="1"/>
</dbReference>
<dbReference type="NCBIfam" id="NF001204">
    <property type="entry name" value="PRK00166.1"/>
    <property type="match status" value="1"/>
</dbReference>
<dbReference type="PANTHER" id="PTHR40942">
    <property type="match status" value="1"/>
</dbReference>
<dbReference type="PANTHER" id="PTHR40942:SF4">
    <property type="entry name" value="CYTOCHROME C5"/>
    <property type="match status" value="1"/>
</dbReference>
<dbReference type="Pfam" id="PF00149">
    <property type="entry name" value="Metallophos"/>
    <property type="match status" value="1"/>
</dbReference>
<dbReference type="PIRSF" id="PIRSF000903">
    <property type="entry name" value="B5n-ttraPtase_sm"/>
    <property type="match status" value="1"/>
</dbReference>
<dbReference type="SUPFAM" id="SSF56300">
    <property type="entry name" value="Metallo-dependent phosphatases"/>
    <property type="match status" value="1"/>
</dbReference>
<name>APAH_NEIG2</name>
<sequence length="276" mass="30879">MAHYAIGDIQGCFDELTALLGKIGFNHGTDTLWLTGDIVNRGPKSLETLQFCIRHENSVQIVLGNHDLYLLAVGCGEGALKRSDTIEPILKHPDGGKMLDWLRAQPLLIREGGRVMIHAGILPQWRIAKAESLAGEAEAELRGKKYVKFFSKMYGNKPAAWDEGLEGYARLRFIVNAFTRMRALTFKNELDFDYKSTVKKMPPYLRPWFKAPDRQNLDHTIIFGHWSSLGYTNADNVISLDTGALWGGQLTAVNLETEEITQVQAAGGIDWKSFAK</sequence>
<comment type="function">
    <text evidence="1">Hydrolyzes diadenosine 5',5'''-P1,P4-tetraphosphate to yield ADP.</text>
</comment>
<comment type="catalytic activity">
    <reaction evidence="1">
        <text>P(1),P(4)-bis(5'-adenosyl) tetraphosphate + H2O = 2 ADP + 2 H(+)</text>
        <dbReference type="Rhea" id="RHEA:24252"/>
        <dbReference type="ChEBI" id="CHEBI:15377"/>
        <dbReference type="ChEBI" id="CHEBI:15378"/>
        <dbReference type="ChEBI" id="CHEBI:58141"/>
        <dbReference type="ChEBI" id="CHEBI:456216"/>
        <dbReference type="EC" id="3.6.1.41"/>
    </reaction>
</comment>
<comment type="similarity">
    <text evidence="1">Belongs to the Ap4A hydrolase family.</text>
</comment>
<protein>
    <recommendedName>
        <fullName evidence="1">Bis(5'-nucleosyl)-tetraphosphatase, symmetrical</fullName>
        <ecNumber evidence="1">3.6.1.41</ecNumber>
    </recommendedName>
    <alternativeName>
        <fullName evidence="1">Ap4A hydrolase</fullName>
    </alternativeName>
    <alternativeName>
        <fullName evidence="1">Diadenosine 5',5'''-P1,P4-tetraphosphate pyrophosphohydrolase</fullName>
    </alternativeName>
    <alternativeName>
        <fullName evidence="1">Diadenosine tetraphosphatase</fullName>
    </alternativeName>
</protein>